<comment type="function">
    <text evidence="5 6 7 9">Required for biofilm formation (PubMed:16430695, PubMed:16430696, PubMed:21477127, PubMed:24488317). Required for the proper anchoring and polymerization of TasA amyloid fibers at the cell surface (PubMed:16430696, PubMed:21477127, PubMed:24488317). Is also a minor component of TasA fibers (PubMed:21477127).</text>
</comment>
<comment type="subcellular location">
    <subcellularLocation>
        <location evidence="7">Secreted</location>
        <location evidence="7">Cell wall</location>
    </subcellularLocation>
    <subcellularLocation>
        <location evidence="4 7">Secreted</location>
    </subcellularLocation>
    <text evidence="4 7">Closely associated with the peptidoglycan in the cell wall. Is also present in the extracellular matrix (PubMed:21477127). Processing and export depend on SipW (PubMed:10559173).</text>
</comment>
<comment type="induction">
    <text evidence="3 4 5 8">Part of the tapA-sipW-tasA operon (PubMed:10464223). Expression is directly repressed by the DNA-binding protein master regulator of biofilm formation SinR and activated by the extracellular matrix regulatory protein RemA (PubMed:16430695, PubMed:23646920). Also positively regulated by the sporulation transcription factors sigma H and Spo0A and repressed by the transition phase regulatory protein AbrB, probably indirectly (PubMed:10464223). Induced by a high concentration of salt (PubMed:10559173). During most conditions of growth, may be present at very low levels or is not synthesized at all, due, at least in part, to post-transcriptional repression (PubMed:10559173).</text>
</comment>
<comment type="disruption phenotype">
    <text evidence="5 7">Mutation impairs colony surface architecture (PubMed:16430695). Mutant produces fewer and altered amyloid fibers (PubMed:21477127).</text>
</comment>
<gene>
    <name evidence="10" type="primary">tapA</name>
    <name type="synonym">yqhD</name>
    <name type="synonym">yqxM</name>
    <name type="ordered locus">BSU24640</name>
</gene>
<proteinExistence type="evidence at protein level"/>
<keyword id="KW-0002">3D-structure</keyword>
<keyword id="KW-0134">Cell wall</keyword>
<keyword id="KW-1185">Reference proteome</keyword>
<keyword id="KW-0964">Secreted</keyword>
<keyword id="KW-0732">Signal</keyword>
<accession>P40949</accession>
<sequence>MFRLFHNQQKAKTKLKVLLIFQLSVIFSLTAAICLQFSDDTSAAFHDIETFDVSLQTCKDFQHTDKNCHYDKRWDQSDLHISDQTDTKGTVCSPFALFAVLENTGEKLKKSKWKWELHKLENARKPLKDGNVIEKGFVSNQIGDSLYKIETKKKMKPGIYAFKVYKPAGYPANGSTFEWSEPMRLAKCDEKPTVPKKETKSDVKKENETTQKDIPEKTMKEETSQEAVTKEKETQSDQKESGEEDEKSNEADQ</sequence>
<protein>
    <recommendedName>
        <fullName evidence="10">TasA anchoring/assembly protein</fullName>
    </recommendedName>
    <alternativeName>
        <fullName evidence="11">Biofilm assembly accessory protein TapA</fullName>
    </alternativeName>
</protein>
<organism>
    <name type="scientific">Bacillus subtilis (strain 168)</name>
    <dbReference type="NCBI Taxonomy" id="224308"/>
    <lineage>
        <taxon>Bacteria</taxon>
        <taxon>Bacillati</taxon>
        <taxon>Bacillota</taxon>
        <taxon>Bacilli</taxon>
        <taxon>Bacillales</taxon>
        <taxon>Bacillaceae</taxon>
        <taxon>Bacillus</taxon>
    </lineage>
</organism>
<evidence type="ECO:0000255" key="1"/>
<evidence type="ECO:0000256" key="2">
    <source>
        <dbReference type="SAM" id="MobiDB-lite"/>
    </source>
</evidence>
<evidence type="ECO:0000269" key="3">
    <source>
    </source>
</evidence>
<evidence type="ECO:0000269" key="4">
    <source>
    </source>
</evidence>
<evidence type="ECO:0000269" key="5">
    <source>
    </source>
</evidence>
<evidence type="ECO:0000269" key="6">
    <source>
    </source>
</evidence>
<evidence type="ECO:0000269" key="7">
    <source>
    </source>
</evidence>
<evidence type="ECO:0000269" key="8">
    <source>
    </source>
</evidence>
<evidence type="ECO:0000269" key="9">
    <source>
    </source>
</evidence>
<evidence type="ECO:0000303" key="10">
    <source>
    </source>
</evidence>
<evidence type="ECO:0000305" key="11"/>
<evidence type="ECO:0007829" key="12">
    <source>
        <dbReference type="PDB" id="6QAY"/>
    </source>
</evidence>
<evidence type="ECO:0007829" key="13">
    <source>
        <dbReference type="PDB" id="8AIF"/>
    </source>
</evidence>
<dbReference type="EMBL" id="D84432">
    <property type="protein sequence ID" value="BAA12539.1"/>
    <property type="molecule type" value="Genomic_DNA"/>
</dbReference>
<dbReference type="EMBL" id="AL009126">
    <property type="protein sequence ID" value="CAB14395.1"/>
    <property type="molecule type" value="Genomic_DNA"/>
</dbReference>
<dbReference type="EMBL" id="M29691">
    <property type="protein sequence ID" value="AAA83374.1"/>
    <property type="molecule type" value="Genomic_DNA"/>
</dbReference>
<dbReference type="PIR" id="G69968">
    <property type="entry name" value="G69968"/>
</dbReference>
<dbReference type="RefSeq" id="NP_390344.1">
    <property type="nucleotide sequence ID" value="NC_000964.3"/>
</dbReference>
<dbReference type="RefSeq" id="WP_004399106.1">
    <property type="nucleotide sequence ID" value="NZ_OZ025638.1"/>
</dbReference>
<dbReference type="PDB" id="6HQC">
    <property type="method" value="X-ray"/>
    <property type="resolution" value="1.28 A"/>
    <property type="chains" value="A=75-190"/>
</dbReference>
<dbReference type="PDB" id="6QAY">
    <property type="method" value="NMR"/>
    <property type="chains" value="A=44-190"/>
</dbReference>
<dbReference type="PDB" id="8AIF">
    <property type="method" value="X-ray"/>
    <property type="resolution" value="1.07 A"/>
    <property type="chains" value="A/B/C=71-190"/>
</dbReference>
<dbReference type="PDBsum" id="6HQC"/>
<dbReference type="PDBsum" id="6QAY"/>
<dbReference type="PDBsum" id="8AIF"/>
<dbReference type="BMRB" id="P40949"/>
<dbReference type="SMR" id="P40949"/>
<dbReference type="FunCoup" id="P40949">
    <property type="interactions" value="40"/>
</dbReference>
<dbReference type="STRING" id="224308.BSU24640"/>
<dbReference type="PaxDb" id="224308-BSU24640"/>
<dbReference type="DNASU" id="938532"/>
<dbReference type="EnsemblBacteria" id="CAB14395">
    <property type="protein sequence ID" value="CAB14395"/>
    <property type="gene ID" value="BSU_24640"/>
</dbReference>
<dbReference type="GeneID" id="938532"/>
<dbReference type="KEGG" id="bsu:BSU24640"/>
<dbReference type="PATRIC" id="fig|224308.179.peg.2682"/>
<dbReference type="eggNOG" id="ENOG5030CJ7">
    <property type="taxonomic scope" value="Bacteria"/>
</dbReference>
<dbReference type="InParanoid" id="P40949"/>
<dbReference type="OrthoDB" id="2923211at2"/>
<dbReference type="BioCyc" id="BSUB:BSU24640-MONOMER"/>
<dbReference type="Proteomes" id="UP000001570">
    <property type="component" value="Chromosome"/>
</dbReference>
<dbReference type="GO" id="GO:0097311">
    <property type="term" value="C:bacterial biofilm matrix"/>
    <property type="evidence" value="ECO:0007669"/>
    <property type="project" value="InterPro"/>
</dbReference>
<dbReference type="GO" id="GO:0005576">
    <property type="term" value="C:extracellular region"/>
    <property type="evidence" value="ECO:0007669"/>
    <property type="project" value="UniProtKB-SubCell"/>
</dbReference>
<dbReference type="InterPro" id="IPR023833">
    <property type="entry name" value="Signal_pept_SipW-depend-type"/>
</dbReference>
<dbReference type="InterPro" id="IPR023848">
    <property type="entry name" value="TasA"/>
</dbReference>
<dbReference type="NCBIfam" id="TIGR04088">
    <property type="entry name" value="cognate_SipW"/>
    <property type="match status" value="1"/>
</dbReference>
<dbReference type="NCBIfam" id="TIGR04087">
    <property type="entry name" value="YqxM_for_SipW"/>
    <property type="match status" value="1"/>
</dbReference>
<name>TAPA_BACSU</name>
<feature type="signal peptide" evidence="1">
    <location>
        <begin position="1"/>
        <end position="32"/>
    </location>
</feature>
<feature type="chain" id="PRO_0000049851" description="TasA anchoring/assembly protein">
    <location>
        <begin position="33"/>
        <end position="253"/>
    </location>
</feature>
<feature type="region of interest" description="Important for TasA fiber formation" evidence="9">
    <location>
        <begin position="50"/>
        <end position="57"/>
    </location>
</feature>
<feature type="region of interest" description="Disordered" evidence="2">
    <location>
        <begin position="190"/>
        <end position="253"/>
    </location>
</feature>
<feature type="compositionally biased region" description="Basic and acidic residues" evidence="2">
    <location>
        <begin position="190"/>
        <end position="241"/>
    </location>
</feature>
<feature type="sequence conflict" description="In Ref. 3; AAA83374." evidence="11" ref="3">
    <original>DDTSAAFHDIETF</original>
    <variation>MIQALLFMILKHL</variation>
    <location>
        <begin position="39"/>
        <end position="51"/>
    </location>
</feature>
<feature type="turn" evidence="12">
    <location>
        <begin position="75"/>
        <end position="78"/>
    </location>
</feature>
<feature type="strand" evidence="13">
    <location>
        <begin position="79"/>
        <end position="84"/>
    </location>
</feature>
<feature type="strand" evidence="13">
    <location>
        <begin position="92"/>
        <end position="94"/>
    </location>
</feature>
<feature type="strand" evidence="13">
    <location>
        <begin position="98"/>
        <end position="103"/>
    </location>
</feature>
<feature type="strand" evidence="13">
    <location>
        <begin position="114"/>
        <end position="119"/>
    </location>
</feature>
<feature type="strand" evidence="12">
    <location>
        <begin position="123"/>
        <end position="125"/>
    </location>
</feature>
<feature type="strand" evidence="13">
    <location>
        <begin position="131"/>
        <end position="138"/>
    </location>
</feature>
<feature type="strand" evidence="13">
    <location>
        <begin position="140"/>
        <end position="143"/>
    </location>
</feature>
<feature type="strand" evidence="13">
    <location>
        <begin position="146"/>
        <end position="150"/>
    </location>
</feature>
<feature type="strand" evidence="13">
    <location>
        <begin position="157"/>
        <end position="165"/>
    </location>
</feature>
<feature type="strand" evidence="13">
    <location>
        <begin position="172"/>
        <end position="174"/>
    </location>
</feature>
<feature type="strand" evidence="13">
    <location>
        <begin position="176"/>
        <end position="179"/>
    </location>
</feature>
<feature type="strand" evidence="13">
    <location>
        <begin position="183"/>
        <end position="186"/>
    </location>
</feature>
<reference key="1">
    <citation type="journal article" date="1996" name="Microbiology">
        <title>Systematic sequencing of the 283 kb 210 degrees-232 degrees region of the Bacillus subtilis genome containing the skin element and many sporulation genes.</title>
        <authorList>
            <person name="Mizuno M."/>
            <person name="Masuda S."/>
            <person name="Takemaru K."/>
            <person name="Hosono S."/>
            <person name="Sato T."/>
            <person name="Takeuchi M."/>
            <person name="Kobayashi Y."/>
        </authorList>
    </citation>
    <scope>NUCLEOTIDE SEQUENCE [GENOMIC DNA]</scope>
    <source>
        <strain>168 / JH642</strain>
    </source>
</reference>
<reference key="2">
    <citation type="journal article" date="1997" name="Nature">
        <title>The complete genome sequence of the Gram-positive bacterium Bacillus subtilis.</title>
        <authorList>
            <person name="Kunst F."/>
            <person name="Ogasawara N."/>
            <person name="Moszer I."/>
            <person name="Albertini A.M."/>
            <person name="Alloni G."/>
            <person name="Azevedo V."/>
            <person name="Bertero M.G."/>
            <person name="Bessieres P."/>
            <person name="Bolotin A."/>
            <person name="Borchert S."/>
            <person name="Borriss R."/>
            <person name="Boursier L."/>
            <person name="Brans A."/>
            <person name="Braun M."/>
            <person name="Brignell S.C."/>
            <person name="Bron S."/>
            <person name="Brouillet S."/>
            <person name="Bruschi C.V."/>
            <person name="Caldwell B."/>
            <person name="Capuano V."/>
            <person name="Carter N.M."/>
            <person name="Choi S.-K."/>
            <person name="Codani J.-J."/>
            <person name="Connerton I.F."/>
            <person name="Cummings N.J."/>
            <person name="Daniel R.A."/>
            <person name="Denizot F."/>
            <person name="Devine K.M."/>
            <person name="Duesterhoeft A."/>
            <person name="Ehrlich S.D."/>
            <person name="Emmerson P.T."/>
            <person name="Entian K.-D."/>
            <person name="Errington J."/>
            <person name="Fabret C."/>
            <person name="Ferrari E."/>
            <person name="Foulger D."/>
            <person name="Fritz C."/>
            <person name="Fujita M."/>
            <person name="Fujita Y."/>
            <person name="Fuma S."/>
            <person name="Galizzi A."/>
            <person name="Galleron N."/>
            <person name="Ghim S.-Y."/>
            <person name="Glaser P."/>
            <person name="Goffeau A."/>
            <person name="Golightly E.J."/>
            <person name="Grandi G."/>
            <person name="Guiseppi G."/>
            <person name="Guy B.J."/>
            <person name="Haga K."/>
            <person name="Haiech J."/>
            <person name="Harwood C.R."/>
            <person name="Henaut A."/>
            <person name="Hilbert H."/>
            <person name="Holsappel S."/>
            <person name="Hosono S."/>
            <person name="Hullo M.-F."/>
            <person name="Itaya M."/>
            <person name="Jones L.-M."/>
            <person name="Joris B."/>
            <person name="Karamata D."/>
            <person name="Kasahara Y."/>
            <person name="Klaerr-Blanchard M."/>
            <person name="Klein C."/>
            <person name="Kobayashi Y."/>
            <person name="Koetter P."/>
            <person name="Koningstein G."/>
            <person name="Krogh S."/>
            <person name="Kumano M."/>
            <person name="Kurita K."/>
            <person name="Lapidus A."/>
            <person name="Lardinois S."/>
            <person name="Lauber J."/>
            <person name="Lazarevic V."/>
            <person name="Lee S.-M."/>
            <person name="Levine A."/>
            <person name="Liu H."/>
            <person name="Masuda S."/>
            <person name="Mauel C."/>
            <person name="Medigue C."/>
            <person name="Medina N."/>
            <person name="Mellado R.P."/>
            <person name="Mizuno M."/>
            <person name="Moestl D."/>
            <person name="Nakai S."/>
            <person name="Noback M."/>
            <person name="Noone D."/>
            <person name="O'Reilly M."/>
            <person name="Ogawa K."/>
            <person name="Ogiwara A."/>
            <person name="Oudega B."/>
            <person name="Park S.-H."/>
            <person name="Parro V."/>
            <person name="Pohl T.M."/>
            <person name="Portetelle D."/>
            <person name="Porwollik S."/>
            <person name="Prescott A.M."/>
            <person name="Presecan E."/>
            <person name="Pujic P."/>
            <person name="Purnelle B."/>
            <person name="Rapoport G."/>
            <person name="Rey M."/>
            <person name="Reynolds S."/>
            <person name="Rieger M."/>
            <person name="Rivolta C."/>
            <person name="Rocha E."/>
            <person name="Roche B."/>
            <person name="Rose M."/>
            <person name="Sadaie Y."/>
            <person name="Sato T."/>
            <person name="Scanlan E."/>
            <person name="Schleich S."/>
            <person name="Schroeter R."/>
            <person name="Scoffone F."/>
            <person name="Sekiguchi J."/>
            <person name="Sekowska A."/>
            <person name="Seror S.J."/>
            <person name="Serror P."/>
            <person name="Shin B.-S."/>
            <person name="Soldo B."/>
            <person name="Sorokin A."/>
            <person name="Tacconi E."/>
            <person name="Takagi T."/>
            <person name="Takahashi H."/>
            <person name="Takemaru K."/>
            <person name="Takeuchi M."/>
            <person name="Tamakoshi A."/>
            <person name="Tanaka T."/>
            <person name="Terpstra P."/>
            <person name="Tognoni A."/>
            <person name="Tosato V."/>
            <person name="Uchiyama S."/>
            <person name="Vandenbol M."/>
            <person name="Vannier F."/>
            <person name="Vassarotti A."/>
            <person name="Viari A."/>
            <person name="Wambutt R."/>
            <person name="Wedler E."/>
            <person name="Wedler H."/>
            <person name="Weitzenegger T."/>
            <person name="Winters P."/>
            <person name="Wipat A."/>
            <person name="Yamamoto H."/>
            <person name="Yamane K."/>
            <person name="Yasumoto K."/>
            <person name="Yata K."/>
            <person name="Yoshida K."/>
            <person name="Yoshikawa H.-F."/>
            <person name="Zumstein E."/>
            <person name="Yoshikawa H."/>
            <person name="Danchin A."/>
        </authorList>
    </citation>
    <scope>NUCLEOTIDE SEQUENCE [LARGE SCALE GENOMIC DNA]</scope>
    <source>
        <strain>168</strain>
    </source>
</reference>
<reference key="3">
    <citation type="journal article" date="1989" name="J. Bacteriol.">
        <title>Nucleotide sequence and genetic organization of the Bacillus subtilis comG operon.</title>
        <authorList>
            <person name="Albano M."/>
            <person name="Breitling R."/>
            <person name="Dubnau D.A."/>
        </authorList>
    </citation>
    <scope>NUCLEOTIDE SEQUENCE [GENOMIC DNA] OF 1-51</scope>
</reference>
<reference key="4">
    <citation type="journal article" date="1999" name="J. Bacteriol.">
        <title>Regulation of synthesis of the Bacillus subtilis transition-phase, spore-associated antibacterial protein TasA.</title>
        <authorList>
            <person name="Stoever A.G."/>
            <person name="Driks A."/>
        </authorList>
    </citation>
    <scope>INDUCTION</scope>
</reference>
<reference key="5">
    <citation type="journal article" date="1999" name="J. Bacteriol.">
        <title>Control of synthesis and secretion of the Bacillus subtilis protein YqxM.</title>
        <authorList>
            <person name="Stoever A.G."/>
            <person name="Driks A."/>
        </authorList>
    </citation>
    <scope>SUBCELLULAR LOCATION</scope>
    <scope>INDUCTION</scope>
</reference>
<reference key="6">
    <citation type="journal article" date="2006" name="Mol. Microbiol.">
        <title>Targets of the master regulator of biofilm formation in Bacillus subtilis.</title>
        <authorList>
            <person name="Chu F."/>
            <person name="Kearns D.B."/>
            <person name="Branda S.S."/>
            <person name="Kolter R."/>
            <person name="Losick R."/>
        </authorList>
    </citation>
    <scope>FUNCTION</scope>
    <scope>REPRESSION BY SINR</scope>
    <scope>DISRUPTION PHENOTYPE</scope>
</reference>
<reference key="7">
    <citation type="journal article" date="2006" name="Mol. Microbiol.">
        <title>A major protein component of the Bacillus subtilis biofilm matrix.</title>
        <authorList>
            <person name="Branda S.S."/>
            <person name="Chu F."/>
            <person name="Kearns D.B."/>
            <person name="Losick R."/>
            <person name="Kolter R."/>
        </authorList>
    </citation>
    <scope>FUNCTION</scope>
</reference>
<reference key="8">
    <citation type="journal article" date="2011" name="Mol. Microbiol.">
        <title>An accessory protein required for anchoring and assembly of amyloid fibres in B. subtilis biofilms.</title>
        <authorList>
            <person name="Romero D."/>
            <person name="Vlamakis H."/>
            <person name="Losick R."/>
            <person name="Kolter R."/>
        </authorList>
    </citation>
    <scope>FUNCTION</scope>
    <scope>SUBCELLULAR LOCATION</scope>
    <scope>DISRUPTION PHENOTYPE</scope>
</reference>
<reference key="9">
    <citation type="journal article" date="2013" name="Mol. Microbiol.">
        <title>RemA is a DNA-binding protein that activates biofilm matrix gene expression in Bacillus subtilis.</title>
        <authorList>
            <person name="Winkelman J.T."/>
            <person name="Bree A.C."/>
            <person name="Bate A.R."/>
            <person name="Eichenberger P."/>
            <person name="Gourse R.L."/>
            <person name="Kearns D.B."/>
        </authorList>
    </citation>
    <scope>INDUCTION BY REMA</scope>
</reference>
<reference key="10">
    <citation type="journal article" date="2014" name="J. Bacteriol.">
        <title>Functional analysis of the accessory protein TapA in Bacillus subtilis amyloid fiber assembly.</title>
        <authorList>
            <person name="Romero D."/>
            <person name="Vlamakis H."/>
            <person name="Losick R."/>
            <person name="Kolter R."/>
        </authorList>
    </citation>
    <scope>FUNCTION</scope>
</reference>